<protein>
    <recommendedName>
        <fullName>Trem-like transcript 2 protein</fullName>
        <shortName>TLT-2</shortName>
    </recommendedName>
    <alternativeName>
        <fullName>Triggering receptor expressed on myeloid cells-like protein 2</fullName>
    </alternativeName>
</protein>
<comment type="function">
    <text evidence="1 5">Cell surface receptor that may play a role in the innate and adaptive immune response. Acts as a counter-receptor for CD276 and interaction with CD276 on T-cells enhances T-cell activation (By similarity).</text>
</comment>
<comment type="subunit">
    <text evidence="1">Interacts with CD276 and this interaction enhances T-cell activation.</text>
</comment>
<comment type="subcellular location">
    <subcellularLocation>
        <location evidence="1">Cell membrane</location>
        <topology evidence="1">Single-pass type I membrane protein</topology>
    </subcellularLocation>
</comment>
<comment type="tissue specificity">
    <text evidence="5">Detected in B-lymphocytes and macrophages. Detected in spleen, lymph nodes, blood, bone marrow and cells from the peritoneal cavity (at protein level).</text>
</comment>
<comment type="induction">
    <text evidence="5">Up-regulated in neutrophils and macrophages in response to bacterial lipopolysaccharide (LPS) and inflammatory stimuly.</text>
</comment>
<name>TRML2_MOUSE</name>
<organism>
    <name type="scientific">Mus musculus</name>
    <name type="common">Mouse</name>
    <dbReference type="NCBI Taxonomy" id="10090"/>
    <lineage>
        <taxon>Eukaryota</taxon>
        <taxon>Metazoa</taxon>
        <taxon>Chordata</taxon>
        <taxon>Craniata</taxon>
        <taxon>Vertebrata</taxon>
        <taxon>Euteleostomi</taxon>
        <taxon>Mammalia</taxon>
        <taxon>Eutheria</taxon>
        <taxon>Euarchontoglires</taxon>
        <taxon>Glires</taxon>
        <taxon>Rodentia</taxon>
        <taxon>Myomorpha</taxon>
        <taxon>Muroidea</taxon>
        <taxon>Muridae</taxon>
        <taxon>Murinae</taxon>
        <taxon>Mus</taxon>
        <taxon>Mus</taxon>
    </lineage>
</organism>
<keyword id="KW-1003">Cell membrane</keyword>
<keyword id="KW-1015">Disulfide bond</keyword>
<keyword id="KW-0325">Glycoprotein</keyword>
<keyword id="KW-0393">Immunoglobulin domain</keyword>
<keyword id="KW-0472">Membrane</keyword>
<keyword id="KW-0675">Receptor</keyword>
<keyword id="KW-1185">Reference proteome</keyword>
<keyword id="KW-0732">Signal</keyword>
<keyword id="KW-0812">Transmembrane</keyword>
<keyword id="KW-1133">Transmembrane helix</keyword>
<accession>Q2LA85</accession>
<accession>A6XA76</accession>
<dbReference type="EMBL" id="DQ341272">
    <property type="protein sequence ID" value="ABC68265.1"/>
    <property type="molecule type" value="mRNA"/>
</dbReference>
<dbReference type="EMBL" id="DQ087184">
    <property type="protein sequence ID" value="ABA38680.1"/>
    <property type="molecule type" value="mRNA"/>
</dbReference>
<dbReference type="CCDS" id="CCDS37646.1"/>
<dbReference type="RefSeq" id="NP_001028577.2">
    <property type="nucleotide sequence ID" value="NM_001033405.3"/>
</dbReference>
<dbReference type="RefSeq" id="NP_001420257.1">
    <property type="nucleotide sequence ID" value="NM_001433328.1"/>
</dbReference>
<dbReference type="RefSeq" id="NP_001420258.1">
    <property type="nucleotide sequence ID" value="NM_001433329.1"/>
</dbReference>
<dbReference type="RefSeq" id="XP_006524503.1">
    <property type="nucleotide sequence ID" value="XM_006524440.2"/>
</dbReference>
<dbReference type="RefSeq" id="XP_006524504.1">
    <property type="nucleotide sequence ID" value="XM_006524441.3"/>
</dbReference>
<dbReference type="SMR" id="Q2LA85"/>
<dbReference type="BioGRID" id="236663">
    <property type="interactions" value="1"/>
</dbReference>
<dbReference type="FunCoup" id="Q2LA85">
    <property type="interactions" value="353"/>
</dbReference>
<dbReference type="STRING" id="10090.ENSMUSP00000156527"/>
<dbReference type="GlyCosmos" id="Q2LA85">
    <property type="glycosylation" value="1 site, No reported glycans"/>
</dbReference>
<dbReference type="GlyGen" id="Q2LA85">
    <property type="glycosylation" value="1 site"/>
</dbReference>
<dbReference type="PhosphoSitePlus" id="Q2LA85"/>
<dbReference type="PaxDb" id="10090-ENSMUSP00000128215"/>
<dbReference type="ProteomicsDB" id="298236"/>
<dbReference type="Antibodypedia" id="30035">
    <property type="antibodies" value="164 antibodies from 26 providers"/>
</dbReference>
<dbReference type="DNASU" id="328833"/>
<dbReference type="Ensembl" id="ENSMUST00000233092.2">
    <property type="protein sequence ID" value="ENSMUSP00000156527.2"/>
    <property type="gene ID" value="ENSMUSG00000071068.8"/>
</dbReference>
<dbReference type="GeneID" id="328833"/>
<dbReference type="KEGG" id="mmu:328833"/>
<dbReference type="UCSC" id="uc008cxe.1">
    <property type="organism name" value="mouse"/>
</dbReference>
<dbReference type="AGR" id="MGI:2147038"/>
<dbReference type="CTD" id="79865"/>
<dbReference type="MGI" id="MGI:2147038">
    <property type="gene designation" value="Treml2"/>
</dbReference>
<dbReference type="VEuPathDB" id="HostDB:ENSMUSG00000071068"/>
<dbReference type="eggNOG" id="ENOG502SPIC">
    <property type="taxonomic scope" value="Eukaryota"/>
</dbReference>
<dbReference type="GeneTree" id="ENSGT00940000153835"/>
<dbReference type="HOGENOM" id="CLU_044854_0_0_1"/>
<dbReference type="InParanoid" id="Q2LA85"/>
<dbReference type="OMA" id="YPLMGFQ"/>
<dbReference type="OrthoDB" id="8920197at2759"/>
<dbReference type="PhylomeDB" id="Q2LA85"/>
<dbReference type="TreeFam" id="TF337556"/>
<dbReference type="Reactome" id="R-MMU-198933">
    <property type="pathway name" value="Immunoregulatory interactions between a Lymphoid and a non-Lymphoid cell"/>
</dbReference>
<dbReference type="BioGRID-ORCS" id="328833">
    <property type="hits" value="2 hits in 78 CRISPR screens"/>
</dbReference>
<dbReference type="PRO" id="PR:Q2LA85"/>
<dbReference type="Proteomes" id="UP000000589">
    <property type="component" value="Chromosome 17"/>
</dbReference>
<dbReference type="RNAct" id="Q2LA85">
    <property type="molecule type" value="protein"/>
</dbReference>
<dbReference type="Bgee" id="ENSMUSG00000071068">
    <property type="expression patterns" value="Expressed in granulocyte and 26 other cell types or tissues"/>
</dbReference>
<dbReference type="ExpressionAtlas" id="Q2LA85">
    <property type="expression patterns" value="baseline and differential"/>
</dbReference>
<dbReference type="GO" id="GO:0009986">
    <property type="term" value="C:cell surface"/>
    <property type="evidence" value="ECO:0007669"/>
    <property type="project" value="Ensembl"/>
</dbReference>
<dbReference type="GO" id="GO:0005886">
    <property type="term" value="C:plasma membrane"/>
    <property type="evidence" value="ECO:0007669"/>
    <property type="project" value="UniProtKB-SubCell"/>
</dbReference>
<dbReference type="GO" id="GO:0038023">
    <property type="term" value="F:signaling receptor activity"/>
    <property type="evidence" value="ECO:0007669"/>
    <property type="project" value="Ensembl"/>
</dbReference>
<dbReference type="GO" id="GO:0042110">
    <property type="term" value="P:T cell activation"/>
    <property type="evidence" value="ECO:0007669"/>
    <property type="project" value="Ensembl"/>
</dbReference>
<dbReference type="FunFam" id="2.60.40.10:FF:001672">
    <property type="entry name" value="Triggering receptor expressed on myeloid cells like 2"/>
    <property type="match status" value="1"/>
</dbReference>
<dbReference type="Gene3D" id="2.60.40.10">
    <property type="entry name" value="Immunoglobulins"/>
    <property type="match status" value="1"/>
</dbReference>
<dbReference type="InterPro" id="IPR007110">
    <property type="entry name" value="Ig-like_dom"/>
</dbReference>
<dbReference type="InterPro" id="IPR036179">
    <property type="entry name" value="Ig-like_dom_sf"/>
</dbReference>
<dbReference type="InterPro" id="IPR013783">
    <property type="entry name" value="Ig-like_fold"/>
</dbReference>
<dbReference type="InterPro" id="IPR003599">
    <property type="entry name" value="Ig_sub"/>
</dbReference>
<dbReference type="InterPro" id="IPR013106">
    <property type="entry name" value="Ig_V-set"/>
</dbReference>
<dbReference type="InterPro" id="IPR052314">
    <property type="entry name" value="Immune_rcpt_domain"/>
</dbReference>
<dbReference type="PANTHER" id="PTHR16423:SF3">
    <property type="entry name" value="TREM-LIKE TRANSCRIPT 2 PROTEIN"/>
    <property type="match status" value="1"/>
</dbReference>
<dbReference type="PANTHER" id="PTHR16423">
    <property type="entry name" value="TREM-LIKE TRANSCRIPT PROTEIN"/>
    <property type="match status" value="1"/>
</dbReference>
<dbReference type="Pfam" id="PF07686">
    <property type="entry name" value="V-set"/>
    <property type="match status" value="1"/>
</dbReference>
<dbReference type="SMART" id="SM00409">
    <property type="entry name" value="IG"/>
    <property type="match status" value="1"/>
</dbReference>
<dbReference type="SUPFAM" id="SSF48726">
    <property type="entry name" value="Immunoglobulin"/>
    <property type="match status" value="1"/>
</dbReference>
<dbReference type="PROSITE" id="PS50835">
    <property type="entry name" value="IG_LIKE"/>
    <property type="match status" value="1"/>
</dbReference>
<proteinExistence type="evidence at protein level"/>
<sequence>MEPWPLTFLLLLLLLLWLQGCVSGHSNENLYRKVWRREGETLSVQCSYKNRRNLVEAKSWCKVKKKKCDHNFTRSWVRGPSYSLRDDAKVKVVRITMEALRVQDSGRYWCMRNTAGHFYPLVGFQLEVYPALTTERNVPHTHLTNTPMDGFVTTGQVHISDPHAPFTSDVTMFTSEVTMFTSGLLTLASGTTTPTPVTGYSFIDTSGTVTEPERNTESQPATLSPSNARSFSADPVTTSTMSRHQSSSLSTTGTCHPLTPNRSQETYIPAMVVVLTFLPAPVVLVVAYGFWKKRHMGRYNLGSNYAKPWIHLPEGPETPWKPAWSKITQ</sequence>
<reference key="1">
    <citation type="journal article" date="2006" name="J. Immunol.">
        <title>Trem-like transcript 2 is expressed on cells of the myeloid/granuloid and B lymphoid lineage and is up-regulated in response to inflammation.</title>
        <authorList>
            <person name="King R.G."/>
            <person name="Herrin B.R."/>
            <person name="Justement L.B."/>
        </authorList>
    </citation>
    <scope>NUCLEOTIDE SEQUENCE [MRNA]</scope>
    <scope>FUNCTION</scope>
    <scope>INDUCTION</scope>
    <scope>SUBCELLULAR LOCATION</scope>
    <scope>TISSUE SPECIFICITY</scope>
    <source>
        <strain>C57BL/6J</strain>
        <tissue>Spleen</tissue>
    </source>
</reference>
<reference key="2">
    <citation type="submission" date="2005-06" db="EMBL/GenBank/DDBJ databases">
        <title>Trem-like transcripts expression in microglia and peripheral myeloid cells display a common pattern.</title>
        <authorList>
            <person name="Melchior B."/>
            <person name="Carson M.J."/>
        </authorList>
    </citation>
    <scope>NUCLEOTIDE SEQUENCE [MRNA]</scope>
    <source>
        <strain>C57BL/6J</strain>
    </source>
</reference>
<evidence type="ECO:0000250" key="1"/>
<evidence type="ECO:0000255" key="2"/>
<evidence type="ECO:0000255" key="3">
    <source>
        <dbReference type="PROSITE-ProRule" id="PRU00114"/>
    </source>
</evidence>
<evidence type="ECO:0000256" key="4">
    <source>
        <dbReference type="SAM" id="MobiDB-lite"/>
    </source>
</evidence>
<evidence type="ECO:0000269" key="5">
    <source>
    </source>
</evidence>
<evidence type="ECO:0000305" key="6"/>
<feature type="signal peptide" evidence="2">
    <location>
        <begin position="1"/>
        <end position="24"/>
    </location>
</feature>
<feature type="chain" id="PRO_0000253858" description="Trem-like transcript 2 protein">
    <location>
        <begin position="25"/>
        <end position="329"/>
    </location>
</feature>
<feature type="topological domain" description="Extracellular" evidence="2">
    <location>
        <begin position="25"/>
        <end position="270"/>
    </location>
</feature>
<feature type="transmembrane region" description="Helical" evidence="2">
    <location>
        <begin position="271"/>
        <end position="291"/>
    </location>
</feature>
<feature type="topological domain" description="Cytoplasmic" evidence="2">
    <location>
        <begin position="292"/>
        <end position="329"/>
    </location>
</feature>
<feature type="domain" description="Ig-like V-type">
    <location>
        <begin position="25"/>
        <end position="126"/>
    </location>
</feature>
<feature type="region of interest" description="Disordered" evidence="4">
    <location>
        <begin position="202"/>
        <end position="259"/>
    </location>
</feature>
<feature type="compositionally biased region" description="Polar residues" evidence="4">
    <location>
        <begin position="217"/>
        <end position="259"/>
    </location>
</feature>
<feature type="glycosylation site" description="N-linked (GlcNAc...) asparagine" evidence="2">
    <location>
        <position position="261"/>
    </location>
</feature>
<feature type="disulfide bond" evidence="3">
    <location>
        <begin position="46"/>
        <end position="110"/>
    </location>
</feature>
<feature type="disulfide bond" evidence="3">
    <location>
        <begin position="61"/>
        <end position="68"/>
    </location>
</feature>
<feature type="sequence conflict" description="In Ref. 1; ABC68265." evidence="6" ref="1">
    <original>M</original>
    <variation>V</variation>
    <location>
        <position position="179"/>
    </location>
</feature>
<feature type="sequence conflict" description="In Ref. 1; ABC68265." evidence="6" ref="1">
    <original>I</original>
    <variation>T</variation>
    <location>
        <position position="203"/>
    </location>
</feature>
<gene>
    <name type="primary">Treml2</name>
    <name type="synonym">Tlt2</name>
</gene>